<protein>
    <recommendedName>
        <fullName evidence="5">Reactive Intermediate Deaminase A, chloroplastic</fullName>
        <ecNumber evidence="3">3.5.99.10</ecNumber>
    </recommendedName>
    <alternativeName>
        <fullName>2-iminobutanoate/2-iminopropanoate deaminase</fullName>
    </alternativeName>
</protein>
<gene>
    <name evidence="5" type="primary">RIDA</name>
    <name evidence="7" type="ordered locus">At3g20390</name>
    <name evidence="4" type="ORF">MQC12.15</name>
</gene>
<accession>Q94JQ4</accession>
<accession>Q0WMP6</accession>
<accession>Q9LTQ3</accession>
<reference key="1">
    <citation type="journal article" date="2000" name="DNA Res.">
        <title>Structural analysis of Arabidopsis thaliana chromosome 3. I. Sequence features of the regions of 4,504,864 bp covered by sixty P1 and TAC clones.</title>
        <authorList>
            <person name="Sato S."/>
            <person name="Nakamura Y."/>
            <person name="Kaneko T."/>
            <person name="Katoh T."/>
            <person name="Asamizu E."/>
            <person name="Tabata S."/>
        </authorList>
    </citation>
    <scope>NUCLEOTIDE SEQUENCE [LARGE SCALE GENOMIC DNA]</scope>
    <source>
        <strain>cv. Columbia</strain>
    </source>
</reference>
<reference key="2">
    <citation type="journal article" date="2017" name="Plant J.">
        <title>Araport11: a complete reannotation of the Arabidopsis thaliana reference genome.</title>
        <authorList>
            <person name="Cheng C.Y."/>
            <person name="Krishnakumar V."/>
            <person name="Chan A.P."/>
            <person name="Thibaud-Nissen F."/>
            <person name="Schobel S."/>
            <person name="Town C.D."/>
        </authorList>
    </citation>
    <scope>GENOME REANNOTATION</scope>
    <source>
        <strain>cv. Columbia</strain>
    </source>
</reference>
<reference key="3">
    <citation type="journal article" date="2003" name="Science">
        <title>Empirical analysis of transcriptional activity in the Arabidopsis genome.</title>
        <authorList>
            <person name="Yamada K."/>
            <person name="Lim J."/>
            <person name="Dale J.M."/>
            <person name="Chen H."/>
            <person name="Shinn P."/>
            <person name="Palm C.J."/>
            <person name="Southwick A.M."/>
            <person name="Wu H.C."/>
            <person name="Kim C.J."/>
            <person name="Nguyen M."/>
            <person name="Pham P.K."/>
            <person name="Cheuk R.F."/>
            <person name="Karlin-Newmann G."/>
            <person name="Liu S.X."/>
            <person name="Lam B."/>
            <person name="Sakano H."/>
            <person name="Wu T."/>
            <person name="Yu G."/>
            <person name="Miranda M."/>
            <person name="Quach H.L."/>
            <person name="Tripp M."/>
            <person name="Chang C.H."/>
            <person name="Lee J.M."/>
            <person name="Toriumi M.J."/>
            <person name="Chan M.M."/>
            <person name="Tang C.C."/>
            <person name="Onodera C.S."/>
            <person name="Deng J.M."/>
            <person name="Akiyama K."/>
            <person name="Ansari Y."/>
            <person name="Arakawa T."/>
            <person name="Banh J."/>
            <person name="Banno F."/>
            <person name="Bowser L."/>
            <person name="Brooks S.Y."/>
            <person name="Carninci P."/>
            <person name="Chao Q."/>
            <person name="Choy N."/>
            <person name="Enju A."/>
            <person name="Goldsmith A.D."/>
            <person name="Gurjal M."/>
            <person name="Hansen N.F."/>
            <person name="Hayashizaki Y."/>
            <person name="Johnson-Hopson C."/>
            <person name="Hsuan V.W."/>
            <person name="Iida K."/>
            <person name="Karnes M."/>
            <person name="Khan S."/>
            <person name="Koesema E."/>
            <person name="Ishida J."/>
            <person name="Jiang P.X."/>
            <person name="Jones T."/>
            <person name="Kawai J."/>
            <person name="Kamiya A."/>
            <person name="Meyers C."/>
            <person name="Nakajima M."/>
            <person name="Narusaka M."/>
            <person name="Seki M."/>
            <person name="Sakurai T."/>
            <person name="Satou M."/>
            <person name="Tamse R."/>
            <person name="Vaysberg M."/>
            <person name="Wallender E.K."/>
            <person name="Wong C."/>
            <person name="Yamamura Y."/>
            <person name="Yuan S."/>
            <person name="Shinozaki K."/>
            <person name="Davis R.W."/>
            <person name="Theologis A."/>
            <person name="Ecker J.R."/>
        </authorList>
    </citation>
    <scope>NUCLEOTIDE SEQUENCE [LARGE SCALE MRNA]</scope>
    <source>
        <strain>cv. Columbia</strain>
    </source>
</reference>
<reference key="4">
    <citation type="submission" date="2002-03" db="EMBL/GenBank/DDBJ databases">
        <title>Full-length cDNA from Arabidopsis thaliana.</title>
        <authorList>
            <person name="Brover V.V."/>
            <person name="Troukhan M.E."/>
            <person name="Alexandrov N.A."/>
            <person name="Lu Y.-P."/>
            <person name="Flavell R.B."/>
            <person name="Feldmann K.A."/>
        </authorList>
    </citation>
    <scope>NUCLEOTIDE SEQUENCE [LARGE SCALE MRNA]</scope>
</reference>
<reference key="5">
    <citation type="submission" date="2006-07" db="EMBL/GenBank/DDBJ databases">
        <title>Large-scale analysis of RIKEN Arabidopsis full-length (RAFL) cDNAs.</title>
        <authorList>
            <person name="Totoki Y."/>
            <person name="Seki M."/>
            <person name="Ishida J."/>
            <person name="Nakajima M."/>
            <person name="Enju A."/>
            <person name="Kamiya A."/>
            <person name="Narusaka M."/>
            <person name="Shin-i T."/>
            <person name="Nakagawa M."/>
            <person name="Sakamoto N."/>
            <person name="Oishi K."/>
            <person name="Kohara Y."/>
            <person name="Kobayashi M."/>
            <person name="Toyoda A."/>
            <person name="Sakaki Y."/>
            <person name="Sakurai T."/>
            <person name="Iida K."/>
            <person name="Akiyama K."/>
            <person name="Satou M."/>
            <person name="Toyoda T."/>
            <person name="Konagaya A."/>
            <person name="Carninci P."/>
            <person name="Kawai J."/>
            <person name="Hayashizaki Y."/>
            <person name="Shinozaki K."/>
        </authorList>
    </citation>
    <scope>NUCLEOTIDE SEQUENCE [LARGE SCALE MRNA]</scope>
    <source>
        <strain>cv. Columbia</strain>
    </source>
</reference>
<reference key="6">
    <citation type="journal article" date="2014" name="Plant Cell">
        <title>Arabidopsis and Maize RidA proteins preempt reactive enamine/imine damage to branched-chain amino acid biosynthesis in plastids.</title>
        <authorList>
            <person name="Niehaus T.D."/>
            <person name="Nguyen T.N."/>
            <person name="Gidda S.K."/>
            <person name="ElBadawi-Sidhu M."/>
            <person name="Lambrecht J.A."/>
            <person name="McCarty D.R."/>
            <person name="Downs D.M."/>
            <person name="Cooper A.J."/>
            <person name="Fiehn O."/>
            <person name="Mullen R.T."/>
            <person name="Hanson A.D."/>
        </authorList>
    </citation>
    <scope>FUNCTION</scope>
    <scope>CATALYTIC ACTIVITY</scope>
    <scope>MUTAGENESIS OF ARG-165</scope>
    <scope>TISSUE SPECIFICITY</scope>
    <scope>SUBCELLULAR LOCATION</scope>
    <scope>DISRUPTION PHENOTYPE</scope>
</reference>
<organism evidence="8">
    <name type="scientific">Arabidopsis thaliana</name>
    <name type="common">Mouse-ear cress</name>
    <dbReference type="NCBI Taxonomy" id="3702"/>
    <lineage>
        <taxon>Eukaryota</taxon>
        <taxon>Viridiplantae</taxon>
        <taxon>Streptophyta</taxon>
        <taxon>Embryophyta</taxon>
        <taxon>Tracheophyta</taxon>
        <taxon>Spermatophyta</taxon>
        <taxon>Magnoliopsida</taxon>
        <taxon>eudicotyledons</taxon>
        <taxon>Gunneridae</taxon>
        <taxon>Pentapetalae</taxon>
        <taxon>rosids</taxon>
        <taxon>malvids</taxon>
        <taxon>Brassicales</taxon>
        <taxon>Brassicaceae</taxon>
        <taxon>Camelineae</taxon>
        <taxon>Arabidopsis</taxon>
    </lineage>
</organism>
<name>RIDA_ARATH</name>
<proteinExistence type="evidence at protein level"/>
<sequence>MTWSVFRSINTPTLDLSTALRSTRTPLVAAGVGCATFAGVSLFRMSSRSPPFASLSVSASSVKKEVVSTEKAPAALGPYSQAIKANNLVFLSGVLGLIPETGKFVSESVEDQTEQVLKNMGEILKASGADYSSVVKTTIMLADLADFKTVNEIYAKYFPAPSPARSTYQVAALPLNAKIEIECIATL</sequence>
<comment type="function">
    <text evidence="3">Hydrolyzes the Ser-derived enamine/imine product of Thr dehydratase, protecting the plastidial branched-chain aminotransferase BCAT3 (AC Q9M401) from inactivation. Involved in Ile biosynthesis.</text>
</comment>
<comment type="catalytic activity">
    <reaction evidence="3">
        <text>2-iminobutanoate + H2O = 2-oxobutanoate + NH4(+)</text>
        <dbReference type="Rhea" id="RHEA:39975"/>
        <dbReference type="ChEBI" id="CHEBI:15377"/>
        <dbReference type="ChEBI" id="CHEBI:16763"/>
        <dbReference type="ChEBI" id="CHEBI:28938"/>
        <dbReference type="ChEBI" id="CHEBI:76545"/>
        <dbReference type="EC" id="3.5.99.10"/>
    </reaction>
</comment>
<comment type="catalytic activity">
    <reaction evidence="3">
        <text>2-iminopropanoate + H2O = pyruvate + NH4(+)</text>
        <dbReference type="Rhea" id="RHEA:40671"/>
        <dbReference type="ChEBI" id="CHEBI:15361"/>
        <dbReference type="ChEBI" id="CHEBI:15377"/>
        <dbReference type="ChEBI" id="CHEBI:28938"/>
        <dbReference type="ChEBI" id="CHEBI:44400"/>
        <dbReference type="EC" id="3.5.99.10"/>
    </reaction>
</comment>
<comment type="pathway">
    <text>Amino-acid biosynthesis; L-isoleucine biosynthesis; 2-oxobutanoate from L-threonine.</text>
</comment>
<comment type="subcellular location">
    <subcellularLocation>
        <location evidence="3">Plastid</location>
        <location evidence="3">Chloroplast</location>
    </subcellularLocation>
</comment>
<comment type="tissue specificity">
    <text evidence="5">Expressed in leaves, petiols, petals, carpels and shoot apex.</text>
</comment>
<comment type="disruption phenotype">
    <text evidence="3">Reduced root growth and increased sensitivity of the root to added Ser.</text>
</comment>
<comment type="similarity">
    <text evidence="6">Belongs to the RutC family.</text>
</comment>
<comment type="sequence caution" evidence="6">
    <conflict type="erroneous gene model prediction">
        <sequence resource="EMBL-CDS" id="BAB02821"/>
    </conflict>
</comment>
<comment type="sequence caution" evidence="6">
    <conflict type="erroneous initiation">
        <sequence resource="EMBL-CDS" id="BAF01604"/>
    </conflict>
    <text>Extended N-terminus.</text>
</comment>
<evidence type="ECO:0000250" key="1">
    <source>
        <dbReference type="UniProtKB" id="Q7CP78"/>
    </source>
</evidence>
<evidence type="ECO:0000255" key="2"/>
<evidence type="ECO:0000269" key="3">
    <source>
    </source>
</evidence>
<evidence type="ECO:0000303" key="4">
    <source>
    </source>
</evidence>
<evidence type="ECO:0000303" key="5">
    <source>
    </source>
</evidence>
<evidence type="ECO:0000305" key="6"/>
<evidence type="ECO:0000312" key="7">
    <source>
        <dbReference type="Araport" id="AT3G20390"/>
    </source>
</evidence>
<evidence type="ECO:0000312" key="8">
    <source>
        <dbReference type="EMBL" id="AAK53030.1"/>
    </source>
</evidence>
<evidence type="ECO:0007829" key="9">
    <source>
        <dbReference type="PDB" id="5HP7"/>
    </source>
</evidence>
<dbReference type="EC" id="3.5.99.10" evidence="3"/>
<dbReference type="EMBL" id="AB024036">
    <property type="protein sequence ID" value="BAB02821.1"/>
    <property type="status" value="ALT_SEQ"/>
    <property type="molecule type" value="Genomic_DNA"/>
</dbReference>
<dbReference type="EMBL" id="CP002686">
    <property type="protein sequence ID" value="AEE76372.1"/>
    <property type="molecule type" value="Genomic_DNA"/>
</dbReference>
<dbReference type="EMBL" id="AF375446">
    <property type="protein sequence ID" value="AAK53030.1"/>
    <property type="molecule type" value="mRNA"/>
</dbReference>
<dbReference type="EMBL" id="AY060547">
    <property type="protein sequence ID" value="AAL31178.1"/>
    <property type="molecule type" value="mRNA"/>
</dbReference>
<dbReference type="EMBL" id="AY086036">
    <property type="protein sequence ID" value="AAM63246.1"/>
    <property type="molecule type" value="mRNA"/>
</dbReference>
<dbReference type="EMBL" id="AK227774">
    <property type="protein sequence ID" value="BAE99756.1"/>
    <property type="molecule type" value="mRNA"/>
</dbReference>
<dbReference type="EMBL" id="AK229768">
    <property type="protein sequence ID" value="BAF01604.1"/>
    <property type="status" value="ALT_INIT"/>
    <property type="molecule type" value="mRNA"/>
</dbReference>
<dbReference type="RefSeq" id="NP_001327365.1">
    <property type="nucleotide sequence ID" value="NM_001338478.1"/>
</dbReference>
<dbReference type="RefSeq" id="NP_188674.1">
    <property type="nucleotide sequence ID" value="NM_112930.3"/>
</dbReference>
<dbReference type="PDB" id="5HP7">
    <property type="method" value="X-ray"/>
    <property type="resolution" value="2.00 A"/>
    <property type="chains" value="A=68-187"/>
</dbReference>
<dbReference type="PDB" id="5HP8">
    <property type="method" value="X-ray"/>
    <property type="resolution" value="2.30 A"/>
    <property type="chains" value="A/B/C=68-187"/>
</dbReference>
<dbReference type="PDBsum" id="5HP7"/>
<dbReference type="PDBsum" id="5HP8"/>
<dbReference type="SMR" id="Q94JQ4"/>
<dbReference type="BioGRID" id="6916">
    <property type="interactions" value="6"/>
</dbReference>
<dbReference type="FunCoup" id="Q94JQ4">
    <property type="interactions" value="2274"/>
</dbReference>
<dbReference type="IntAct" id="Q94JQ4">
    <property type="interactions" value="1"/>
</dbReference>
<dbReference type="STRING" id="3702.Q94JQ4"/>
<dbReference type="iPTMnet" id="Q94JQ4"/>
<dbReference type="MetOSite" id="Q94JQ4"/>
<dbReference type="PaxDb" id="3702-AT3G20390.1"/>
<dbReference type="EnsemblPlants" id="AT3G20390.1">
    <property type="protein sequence ID" value="AT3G20390.1"/>
    <property type="gene ID" value="AT3G20390"/>
</dbReference>
<dbReference type="GeneID" id="821584"/>
<dbReference type="Gramene" id="AT3G20390.1">
    <property type="protein sequence ID" value="AT3G20390.1"/>
    <property type="gene ID" value="AT3G20390"/>
</dbReference>
<dbReference type="KEGG" id="ath:AT3G20390"/>
<dbReference type="Araport" id="AT3G20390"/>
<dbReference type="TAIR" id="AT3G20390">
    <property type="gene designation" value="RIDA"/>
</dbReference>
<dbReference type="eggNOG" id="KOG2317">
    <property type="taxonomic scope" value="Eukaryota"/>
</dbReference>
<dbReference type="HOGENOM" id="CLU_100715_0_0_1"/>
<dbReference type="InParanoid" id="Q94JQ4"/>
<dbReference type="OrthoDB" id="309640at2759"/>
<dbReference type="PhylomeDB" id="Q94JQ4"/>
<dbReference type="BRENDA" id="3.5.99.10">
    <property type="organism ID" value="399"/>
</dbReference>
<dbReference type="CD-CODE" id="4299E36E">
    <property type="entry name" value="Nucleolus"/>
</dbReference>
<dbReference type="PRO" id="PR:Q94JQ4"/>
<dbReference type="Proteomes" id="UP000006548">
    <property type="component" value="Chromosome 3"/>
</dbReference>
<dbReference type="ExpressionAtlas" id="Q94JQ4">
    <property type="expression patterns" value="baseline and differential"/>
</dbReference>
<dbReference type="GO" id="GO:0009507">
    <property type="term" value="C:chloroplast"/>
    <property type="evidence" value="ECO:0000314"/>
    <property type="project" value="TAIR"/>
</dbReference>
<dbReference type="GO" id="GO:0009941">
    <property type="term" value="C:chloroplast envelope"/>
    <property type="evidence" value="ECO:0007005"/>
    <property type="project" value="TAIR"/>
</dbReference>
<dbReference type="GO" id="GO:0009570">
    <property type="term" value="C:chloroplast stroma"/>
    <property type="evidence" value="ECO:0007005"/>
    <property type="project" value="TAIR"/>
</dbReference>
<dbReference type="GO" id="GO:0005829">
    <property type="term" value="C:cytosol"/>
    <property type="evidence" value="ECO:0007005"/>
    <property type="project" value="TAIR"/>
</dbReference>
<dbReference type="GO" id="GO:0000325">
    <property type="term" value="C:plant-type vacuole"/>
    <property type="evidence" value="ECO:0007005"/>
    <property type="project" value="TAIR"/>
</dbReference>
<dbReference type="GO" id="GO:0009536">
    <property type="term" value="C:plastid"/>
    <property type="evidence" value="ECO:0007005"/>
    <property type="project" value="TAIR"/>
</dbReference>
<dbReference type="GO" id="GO:0009579">
    <property type="term" value="C:thylakoid"/>
    <property type="evidence" value="ECO:0007005"/>
    <property type="project" value="TAIR"/>
</dbReference>
<dbReference type="GO" id="GO:0120242">
    <property type="term" value="F:2-iminobutanoate deaminase activity"/>
    <property type="evidence" value="ECO:0007669"/>
    <property type="project" value="RHEA"/>
</dbReference>
<dbReference type="GO" id="GO:0120243">
    <property type="term" value="F:2-iminopropanoate deaminase activity"/>
    <property type="evidence" value="ECO:0007669"/>
    <property type="project" value="RHEA"/>
</dbReference>
<dbReference type="GO" id="GO:0019239">
    <property type="term" value="F:deaminase activity"/>
    <property type="evidence" value="ECO:0000314"/>
    <property type="project" value="TAIR"/>
</dbReference>
<dbReference type="GO" id="GO:0009082">
    <property type="term" value="P:branched-chain amino acid biosynthetic process"/>
    <property type="evidence" value="ECO:0000315"/>
    <property type="project" value="TAIR"/>
</dbReference>
<dbReference type="GO" id="GO:0009097">
    <property type="term" value="P:isoleucine biosynthetic process"/>
    <property type="evidence" value="ECO:0007669"/>
    <property type="project" value="UniProtKB-KW"/>
</dbReference>
<dbReference type="GO" id="GO:0009636">
    <property type="term" value="P:response to toxic substance"/>
    <property type="evidence" value="ECO:0007669"/>
    <property type="project" value="UniProtKB-KW"/>
</dbReference>
<dbReference type="CDD" id="cd00448">
    <property type="entry name" value="YjgF_YER057c_UK114_family"/>
    <property type="match status" value="1"/>
</dbReference>
<dbReference type="FunFam" id="3.30.1330.40:FF:000006">
    <property type="entry name" value="Reactive Intermediate Deaminase A, chloroplastic"/>
    <property type="match status" value="1"/>
</dbReference>
<dbReference type="Gene3D" id="3.30.1330.40">
    <property type="entry name" value="RutC-like"/>
    <property type="match status" value="1"/>
</dbReference>
<dbReference type="InterPro" id="IPR006056">
    <property type="entry name" value="RidA"/>
</dbReference>
<dbReference type="InterPro" id="IPR019897">
    <property type="entry name" value="RidA_CS"/>
</dbReference>
<dbReference type="InterPro" id="IPR035959">
    <property type="entry name" value="RutC-like_sf"/>
</dbReference>
<dbReference type="InterPro" id="IPR006175">
    <property type="entry name" value="YjgF/YER057c/UK114"/>
</dbReference>
<dbReference type="NCBIfam" id="TIGR00004">
    <property type="entry name" value="Rid family detoxifying hydrolase"/>
    <property type="match status" value="1"/>
</dbReference>
<dbReference type="PANTHER" id="PTHR11803">
    <property type="entry name" value="2-IMINOBUTANOATE/2-IMINOPROPANOATE DEAMINASE RIDA"/>
    <property type="match status" value="1"/>
</dbReference>
<dbReference type="PANTHER" id="PTHR11803:SF39">
    <property type="entry name" value="2-IMINOBUTANOATE_2-IMINOPROPANOATE DEAMINASE"/>
    <property type="match status" value="1"/>
</dbReference>
<dbReference type="Pfam" id="PF01042">
    <property type="entry name" value="Ribonuc_L-PSP"/>
    <property type="match status" value="1"/>
</dbReference>
<dbReference type="SUPFAM" id="SSF55298">
    <property type="entry name" value="YjgF-like"/>
    <property type="match status" value="1"/>
</dbReference>
<dbReference type="PROSITE" id="PS01094">
    <property type="entry name" value="UPF0076"/>
    <property type="match status" value="1"/>
</dbReference>
<keyword id="KW-0002">3D-structure</keyword>
<keyword id="KW-0028">Amino-acid biosynthesis</keyword>
<keyword id="KW-0100">Branched-chain amino acid biosynthesis</keyword>
<keyword id="KW-0150">Chloroplast</keyword>
<keyword id="KW-0216">Detoxification</keyword>
<keyword id="KW-0378">Hydrolase</keyword>
<keyword id="KW-0412">Isoleucine biosynthesis</keyword>
<keyword id="KW-0934">Plastid</keyword>
<keyword id="KW-1185">Reference proteome</keyword>
<keyword id="KW-0809">Transit peptide</keyword>
<feature type="transit peptide" description="Chloroplast" evidence="2">
    <location>
        <begin position="1"/>
        <end position="58"/>
    </location>
</feature>
<feature type="chain" id="PRO_0000430561" description="Reactive Intermediate Deaminase A, chloroplastic">
    <location>
        <begin position="59"/>
        <end position="187"/>
    </location>
</feature>
<feature type="binding site" evidence="1">
    <location>
        <position position="165"/>
    </location>
    <ligand>
        <name>substrate</name>
    </ligand>
</feature>
<feature type="site" description="Stabilizes the substrate" evidence="1">
    <location>
        <position position="79"/>
    </location>
</feature>
<feature type="site" description="Important for catalytic activity at high pH" evidence="1">
    <location>
        <position position="180"/>
    </location>
</feature>
<feature type="mutagenesis site" description="Loss of activity." evidence="3">
    <original>R</original>
    <variation>A</variation>
    <location>
        <position position="165"/>
    </location>
</feature>
<feature type="strand" evidence="9">
    <location>
        <begin position="82"/>
        <end position="85"/>
    </location>
</feature>
<feature type="strand" evidence="9">
    <location>
        <begin position="88"/>
        <end position="94"/>
    </location>
</feature>
<feature type="turn" evidence="9">
    <location>
        <begin position="99"/>
        <end position="101"/>
    </location>
</feature>
<feature type="strand" evidence="9">
    <location>
        <begin position="103"/>
        <end position="105"/>
    </location>
</feature>
<feature type="helix" evidence="9">
    <location>
        <begin position="109"/>
        <end position="126"/>
    </location>
</feature>
<feature type="helix" evidence="9">
    <location>
        <begin position="131"/>
        <end position="133"/>
    </location>
</feature>
<feature type="strand" evidence="9">
    <location>
        <begin position="134"/>
        <end position="142"/>
    </location>
</feature>
<feature type="helix" evidence="9">
    <location>
        <begin position="144"/>
        <end position="146"/>
    </location>
</feature>
<feature type="helix" evidence="9">
    <location>
        <begin position="147"/>
        <end position="157"/>
    </location>
</feature>
<feature type="strand" evidence="9">
    <location>
        <begin position="164"/>
        <end position="169"/>
    </location>
</feature>
<feature type="helix" evidence="9">
    <location>
        <begin position="174"/>
        <end position="176"/>
    </location>
</feature>
<feature type="strand" evidence="9">
    <location>
        <begin position="178"/>
        <end position="186"/>
    </location>
</feature>